<accession>Q83MF6</accession>
<keyword id="KW-0131">Cell cycle</keyword>
<keyword id="KW-0132">Cell division</keyword>
<keyword id="KW-0963">Cytoplasm</keyword>
<keyword id="KW-0342">GTP-binding</keyword>
<keyword id="KW-0547">Nucleotide-binding</keyword>
<keyword id="KW-1185">Reference proteome</keyword>
<keyword id="KW-0717">Septation</keyword>
<name>FTSZ_SHIFL</name>
<sequence length="383" mass="40088">MFEPMELTNDAVIKVIGVGGGGGNAVEHMVRERIEGVEFFAVNTDAQALRKTAVGQTIQIGSGITKGLGAGANPEVGRNAADEDRDALRAALEGADMVFIAAGMGGGTGTGAAPVVAEVAKDLGILTVAVVTKPFNFEGKKRMAFAEQGITELSKHVDSLITIPNDKLLKVLGRGISLLDAFGAANDVLKGAVQGIAELITRPGLMNVDFADVRTVMSEMGYAMMGSGVASGENRAEEAAEMAISSPLLEDIDLSGARGVLVNITAGFDLGLVEVETVGNTIRAFASGNATVVIGTSLDPDMNDELRVTVVATGIGMDKRPEITLVTNKQVQQPVMDRYQQHGMAPLTQEQKPVAKVVNDNAPQTAKEPDYLDIPAFVRKQAD</sequence>
<organism>
    <name type="scientific">Shigella flexneri</name>
    <dbReference type="NCBI Taxonomy" id="623"/>
    <lineage>
        <taxon>Bacteria</taxon>
        <taxon>Pseudomonadati</taxon>
        <taxon>Pseudomonadota</taxon>
        <taxon>Gammaproteobacteria</taxon>
        <taxon>Enterobacterales</taxon>
        <taxon>Enterobacteriaceae</taxon>
        <taxon>Shigella</taxon>
    </lineage>
</organism>
<reference key="1">
    <citation type="journal article" date="2002" name="Nucleic Acids Res.">
        <title>Genome sequence of Shigella flexneri 2a: insights into pathogenicity through comparison with genomes of Escherichia coli K12 and O157.</title>
        <authorList>
            <person name="Jin Q."/>
            <person name="Yuan Z."/>
            <person name="Xu J."/>
            <person name="Wang Y."/>
            <person name="Shen Y."/>
            <person name="Lu W."/>
            <person name="Wang J."/>
            <person name="Liu H."/>
            <person name="Yang J."/>
            <person name="Yang F."/>
            <person name="Zhang X."/>
            <person name="Zhang J."/>
            <person name="Yang G."/>
            <person name="Wu H."/>
            <person name="Qu D."/>
            <person name="Dong J."/>
            <person name="Sun L."/>
            <person name="Xue Y."/>
            <person name="Zhao A."/>
            <person name="Gao Y."/>
            <person name="Zhu J."/>
            <person name="Kan B."/>
            <person name="Ding K."/>
            <person name="Chen S."/>
            <person name="Cheng H."/>
            <person name="Yao Z."/>
            <person name="He B."/>
            <person name="Chen R."/>
            <person name="Ma D."/>
            <person name="Qiang B."/>
            <person name="Wen Y."/>
            <person name="Hou Y."/>
            <person name="Yu J."/>
        </authorList>
    </citation>
    <scope>NUCLEOTIDE SEQUENCE [LARGE SCALE GENOMIC DNA]</scope>
    <source>
        <strain>301 / Serotype 2a</strain>
    </source>
</reference>
<reference key="2">
    <citation type="journal article" date="2003" name="Infect. Immun.">
        <title>Complete genome sequence and comparative genomics of Shigella flexneri serotype 2a strain 2457T.</title>
        <authorList>
            <person name="Wei J."/>
            <person name="Goldberg M.B."/>
            <person name="Burland V."/>
            <person name="Venkatesan M.M."/>
            <person name="Deng W."/>
            <person name="Fournier G."/>
            <person name="Mayhew G.F."/>
            <person name="Plunkett G. III"/>
            <person name="Rose D.J."/>
            <person name="Darling A."/>
            <person name="Mau B."/>
            <person name="Perna N.T."/>
            <person name="Payne S.M."/>
            <person name="Runyen-Janecky L.J."/>
            <person name="Zhou S."/>
            <person name="Schwartz D.C."/>
            <person name="Blattner F.R."/>
        </authorList>
    </citation>
    <scope>NUCLEOTIDE SEQUENCE [LARGE SCALE GENOMIC DNA]</scope>
    <source>
        <strain>ATCC 700930 / 2457T / Serotype 2a</strain>
    </source>
</reference>
<comment type="function">
    <text evidence="1">Essential cell division protein that forms a contractile ring structure (Z ring) at the future cell division site. The regulation of the ring assembly controls the timing and the location of cell division. One of the functions of the FtsZ ring is to recruit other cell division proteins to the septum to produce a new cell wall between the dividing cells. Binds GTP and shows GTPase activity.</text>
</comment>
<comment type="subunit">
    <text evidence="1">Homodimer. Polymerizes to form a dynamic ring structure in a strictly GTP-dependent manner. Interacts directly with several other division proteins.</text>
</comment>
<comment type="subcellular location">
    <subcellularLocation>
        <location evidence="1">Cytoplasm</location>
    </subcellularLocation>
    <text evidence="1">Assembles at midcell at the inner surface of the cytoplasmic membrane.</text>
</comment>
<comment type="similarity">
    <text evidence="1">Belongs to the FtsZ family.</text>
</comment>
<proteinExistence type="inferred from homology"/>
<protein>
    <recommendedName>
        <fullName evidence="1">Cell division protein FtsZ</fullName>
    </recommendedName>
</protein>
<dbReference type="EMBL" id="AE005674">
    <property type="protein sequence ID" value="AAN41757.2"/>
    <property type="molecule type" value="Genomic_DNA"/>
</dbReference>
<dbReference type="EMBL" id="AE014073">
    <property type="protein sequence ID" value="AAP15638.1"/>
    <property type="molecule type" value="Genomic_DNA"/>
</dbReference>
<dbReference type="RefSeq" id="NP_706050.2">
    <property type="nucleotide sequence ID" value="NC_004337.2"/>
</dbReference>
<dbReference type="RefSeq" id="WP_000462780.1">
    <property type="nucleotide sequence ID" value="NZ_CP123365.1"/>
</dbReference>
<dbReference type="SMR" id="Q83MF6"/>
<dbReference type="STRING" id="198214.SF0092"/>
<dbReference type="PaxDb" id="198214-SF0092"/>
<dbReference type="GeneID" id="1024507"/>
<dbReference type="KEGG" id="sfl:SF0092"/>
<dbReference type="KEGG" id="sfx:S0094"/>
<dbReference type="PATRIC" id="fig|198214.7.peg.107"/>
<dbReference type="HOGENOM" id="CLU_024865_0_1_6"/>
<dbReference type="Proteomes" id="UP000001006">
    <property type="component" value="Chromosome"/>
</dbReference>
<dbReference type="Proteomes" id="UP000002673">
    <property type="component" value="Chromosome"/>
</dbReference>
<dbReference type="GO" id="GO:0032153">
    <property type="term" value="C:cell division site"/>
    <property type="evidence" value="ECO:0007669"/>
    <property type="project" value="UniProtKB-UniRule"/>
</dbReference>
<dbReference type="GO" id="GO:0005737">
    <property type="term" value="C:cytoplasm"/>
    <property type="evidence" value="ECO:0007669"/>
    <property type="project" value="UniProtKB-SubCell"/>
</dbReference>
<dbReference type="GO" id="GO:0005525">
    <property type="term" value="F:GTP binding"/>
    <property type="evidence" value="ECO:0007669"/>
    <property type="project" value="UniProtKB-UniRule"/>
</dbReference>
<dbReference type="GO" id="GO:0003924">
    <property type="term" value="F:GTPase activity"/>
    <property type="evidence" value="ECO:0007669"/>
    <property type="project" value="UniProtKB-UniRule"/>
</dbReference>
<dbReference type="GO" id="GO:0000917">
    <property type="term" value="P:division septum assembly"/>
    <property type="evidence" value="ECO:0007669"/>
    <property type="project" value="UniProtKB-KW"/>
</dbReference>
<dbReference type="GO" id="GO:0043093">
    <property type="term" value="P:FtsZ-dependent cytokinesis"/>
    <property type="evidence" value="ECO:0007669"/>
    <property type="project" value="UniProtKB-UniRule"/>
</dbReference>
<dbReference type="GO" id="GO:0051258">
    <property type="term" value="P:protein polymerization"/>
    <property type="evidence" value="ECO:0007669"/>
    <property type="project" value="UniProtKB-UniRule"/>
</dbReference>
<dbReference type="CDD" id="cd02201">
    <property type="entry name" value="FtsZ_type1"/>
    <property type="match status" value="1"/>
</dbReference>
<dbReference type="FunFam" id="3.30.1330.20:FF:000004">
    <property type="entry name" value="Cell division protein FtsZ"/>
    <property type="match status" value="1"/>
</dbReference>
<dbReference type="FunFam" id="3.40.50.1440:FF:000023">
    <property type="entry name" value="Cell division protein FtsZ"/>
    <property type="match status" value="1"/>
</dbReference>
<dbReference type="Gene3D" id="3.30.1330.20">
    <property type="entry name" value="Tubulin/FtsZ, C-terminal domain"/>
    <property type="match status" value="1"/>
</dbReference>
<dbReference type="Gene3D" id="3.40.50.1440">
    <property type="entry name" value="Tubulin/FtsZ, GTPase domain"/>
    <property type="match status" value="1"/>
</dbReference>
<dbReference type="HAMAP" id="MF_00909">
    <property type="entry name" value="FtsZ"/>
    <property type="match status" value="1"/>
</dbReference>
<dbReference type="InterPro" id="IPR000158">
    <property type="entry name" value="Cell_div_FtsZ"/>
</dbReference>
<dbReference type="InterPro" id="IPR020805">
    <property type="entry name" value="Cell_div_FtsZ_CS"/>
</dbReference>
<dbReference type="InterPro" id="IPR045061">
    <property type="entry name" value="FtsZ/CetZ"/>
</dbReference>
<dbReference type="InterPro" id="IPR024757">
    <property type="entry name" value="FtsZ_C"/>
</dbReference>
<dbReference type="InterPro" id="IPR008280">
    <property type="entry name" value="Tub_FtsZ_C"/>
</dbReference>
<dbReference type="InterPro" id="IPR037103">
    <property type="entry name" value="Tubulin/FtsZ-like_C"/>
</dbReference>
<dbReference type="InterPro" id="IPR018316">
    <property type="entry name" value="Tubulin/FtsZ_2-layer-sand-dom"/>
</dbReference>
<dbReference type="InterPro" id="IPR036525">
    <property type="entry name" value="Tubulin/FtsZ_GTPase_sf"/>
</dbReference>
<dbReference type="InterPro" id="IPR003008">
    <property type="entry name" value="Tubulin_FtsZ_GTPase"/>
</dbReference>
<dbReference type="NCBIfam" id="TIGR00065">
    <property type="entry name" value="ftsZ"/>
    <property type="match status" value="1"/>
</dbReference>
<dbReference type="PANTHER" id="PTHR30314">
    <property type="entry name" value="CELL DIVISION PROTEIN FTSZ-RELATED"/>
    <property type="match status" value="1"/>
</dbReference>
<dbReference type="PANTHER" id="PTHR30314:SF3">
    <property type="entry name" value="MITOCHONDRIAL DIVISION PROTEIN FSZA"/>
    <property type="match status" value="1"/>
</dbReference>
<dbReference type="Pfam" id="PF12327">
    <property type="entry name" value="FtsZ_C"/>
    <property type="match status" value="1"/>
</dbReference>
<dbReference type="Pfam" id="PF00091">
    <property type="entry name" value="Tubulin"/>
    <property type="match status" value="1"/>
</dbReference>
<dbReference type="PRINTS" id="PR00423">
    <property type="entry name" value="CELLDVISFTSZ"/>
</dbReference>
<dbReference type="SMART" id="SM00864">
    <property type="entry name" value="Tubulin"/>
    <property type="match status" value="1"/>
</dbReference>
<dbReference type="SMART" id="SM00865">
    <property type="entry name" value="Tubulin_C"/>
    <property type="match status" value="1"/>
</dbReference>
<dbReference type="SUPFAM" id="SSF55307">
    <property type="entry name" value="Tubulin C-terminal domain-like"/>
    <property type="match status" value="1"/>
</dbReference>
<dbReference type="SUPFAM" id="SSF52490">
    <property type="entry name" value="Tubulin nucleotide-binding domain-like"/>
    <property type="match status" value="1"/>
</dbReference>
<dbReference type="PROSITE" id="PS01134">
    <property type="entry name" value="FTSZ_1"/>
    <property type="match status" value="1"/>
</dbReference>
<dbReference type="PROSITE" id="PS01135">
    <property type="entry name" value="FTSZ_2"/>
    <property type="match status" value="1"/>
</dbReference>
<feature type="chain" id="PRO_0000114377" description="Cell division protein FtsZ">
    <location>
        <begin position="1"/>
        <end position="383"/>
    </location>
</feature>
<feature type="binding site" evidence="1">
    <location>
        <begin position="20"/>
        <end position="24"/>
    </location>
    <ligand>
        <name>GTP</name>
        <dbReference type="ChEBI" id="CHEBI:37565"/>
    </ligand>
</feature>
<feature type="binding site" evidence="1">
    <location>
        <begin position="107"/>
        <end position="109"/>
    </location>
    <ligand>
        <name>GTP</name>
        <dbReference type="ChEBI" id="CHEBI:37565"/>
    </ligand>
</feature>
<feature type="binding site" evidence="1">
    <location>
        <position position="138"/>
    </location>
    <ligand>
        <name>GTP</name>
        <dbReference type="ChEBI" id="CHEBI:37565"/>
    </ligand>
</feature>
<feature type="binding site" evidence="1">
    <location>
        <position position="142"/>
    </location>
    <ligand>
        <name>GTP</name>
        <dbReference type="ChEBI" id="CHEBI:37565"/>
    </ligand>
</feature>
<feature type="binding site" evidence="1">
    <location>
        <position position="186"/>
    </location>
    <ligand>
        <name>GTP</name>
        <dbReference type="ChEBI" id="CHEBI:37565"/>
    </ligand>
</feature>
<feature type="sequence conflict" description="In Ref. 2; AAP15638." evidence="2" ref="2">
    <original>N</original>
    <variation>D</variation>
    <location>
        <position position="234"/>
    </location>
</feature>
<feature type="sequence conflict" description="In Ref. 2; AAP15638." evidence="2" ref="2">
    <original>GLVEV</original>
    <variation>RLDEF</variation>
    <location>
        <begin position="271"/>
        <end position="275"/>
    </location>
</feature>
<feature type="sequence conflict" description="In Ref. 2; AAP15638." evidence="2" ref="2">
    <original>G</original>
    <variation>D</variation>
    <location>
        <position position="288"/>
    </location>
</feature>
<feature type="sequence conflict" description="In Ref. 2; AAP15638." evidence="2" ref="2">
    <original>V</original>
    <variation>L</variation>
    <location>
        <position position="378"/>
    </location>
</feature>
<evidence type="ECO:0000255" key="1">
    <source>
        <dbReference type="HAMAP-Rule" id="MF_00909"/>
    </source>
</evidence>
<evidence type="ECO:0000305" key="2"/>
<gene>
    <name evidence="1" type="primary">ftsZ</name>
    <name type="ordered locus">SF0092</name>
    <name type="ordered locus">S0094</name>
</gene>